<name>RL7A_HALWD</name>
<protein>
    <recommendedName>
        <fullName evidence="1">Large ribosomal subunit protein eL8</fullName>
    </recommendedName>
    <alternativeName>
        <fullName evidence="2">50S ribosomal protein L7Ae</fullName>
    </alternativeName>
    <alternativeName>
        <fullName evidence="1">Ribosomal protein L8e</fullName>
    </alternativeName>
</protein>
<reference key="1">
    <citation type="journal article" date="2006" name="BMC Genomics">
        <title>The genome of the square archaeon Haloquadratum walsbyi: life at the limits of water activity.</title>
        <authorList>
            <person name="Bolhuis H."/>
            <person name="Palm P."/>
            <person name="Wende A."/>
            <person name="Falb M."/>
            <person name="Rampp M."/>
            <person name="Rodriguez-Valera F."/>
            <person name="Pfeiffer F."/>
            <person name="Oesterhelt D."/>
        </authorList>
    </citation>
    <scope>NUCLEOTIDE SEQUENCE [LARGE SCALE GENOMIC DNA]</scope>
    <source>
        <strain>DSM 16790 / HBSQ001</strain>
    </source>
</reference>
<comment type="function">
    <text evidence="1">Multifunctional RNA-binding protein that recognizes the K-turn motif in ribosomal RNA, the RNA component of RNase P, box H/ACA, box C/D and box C'/D' sRNAs.</text>
</comment>
<comment type="subunit">
    <text evidence="1">Part of the 50S ribosomal subunit. Probably part of the RNase P complex.</text>
</comment>
<comment type="subcellular location">
    <subcellularLocation>
        <location evidence="1">Cytoplasm</location>
    </subcellularLocation>
</comment>
<comment type="similarity">
    <text evidence="1">Belongs to the eukaryotic ribosomal protein eL8 family.</text>
</comment>
<accession>Q18GA8</accession>
<feature type="chain" id="PRO_1000005025" description="Large ribosomal subunit protein eL8">
    <location>
        <begin position="1"/>
        <end position="120"/>
    </location>
</feature>
<dbReference type="EMBL" id="AM180088">
    <property type="protein sequence ID" value="CAJ52992.1"/>
    <property type="molecule type" value="Genomic_DNA"/>
</dbReference>
<dbReference type="RefSeq" id="WP_011572103.1">
    <property type="nucleotide sequence ID" value="NC_008212.1"/>
</dbReference>
<dbReference type="SMR" id="Q18GA8"/>
<dbReference type="STRING" id="362976.HQ_2885A"/>
<dbReference type="GeneID" id="4194629"/>
<dbReference type="KEGG" id="hwa:HQ_2885A"/>
<dbReference type="eggNOG" id="arCOG01751">
    <property type="taxonomic scope" value="Archaea"/>
</dbReference>
<dbReference type="HOGENOM" id="CLU_084513_4_0_2"/>
<dbReference type="Proteomes" id="UP000001975">
    <property type="component" value="Chromosome"/>
</dbReference>
<dbReference type="GO" id="GO:0005737">
    <property type="term" value="C:cytoplasm"/>
    <property type="evidence" value="ECO:0007669"/>
    <property type="project" value="UniProtKB-SubCell"/>
</dbReference>
<dbReference type="GO" id="GO:1990904">
    <property type="term" value="C:ribonucleoprotein complex"/>
    <property type="evidence" value="ECO:0007669"/>
    <property type="project" value="UniProtKB-KW"/>
</dbReference>
<dbReference type="GO" id="GO:0005840">
    <property type="term" value="C:ribosome"/>
    <property type="evidence" value="ECO:0007669"/>
    <property type="project" value="UniProtKB-KW"/>
</dbReference>
<dbReference type="GO" id="GO:0004526">
    <property type="term" value="F:ribonuclease P activity"/>
    <property type="evidence" value="ECO:0007669"/>
    <property type="project" value="UniProtKB-UniRule"/>
</dbReference>
<dbReference type="GO" id="GO:0019843">
    <property type="term" value="F:rRNA binding"/>
    <property type="evidence" value="ECO:0007669"/>
    <property type="project" value="UniProtKB-KW"/>
</dbReference>
<dbReference type="GO" id="GO:0003735">
    <property type="term" value="F:structural constituent of ribosome"/>
    <property type="evidence" value="ECO:0007669"/>
    <property type="project" value="InterPro"/>
</dbReference>
<dbReference type="GO" id="GO:0006412">
    <property type="term" value="P:translation"/>
    <property type="evidence" value="ECO:0007669"/>
    <property type="project" value="UniProtKB-UniRule"/>
</dbReference>
<dbReference type="GO" id="GO:0001682">
    <property type="term" value="P:tRNA 5'-leader removal"/>
    <property type="evidence" value="ECO:0007669"/>
    <property type="project" value="UniProtKB-UniRule"/>
</dbReference>
<dbReference type="FunFam" id="3.30.1330.30:FF:000020">
    <property type="entry name" value="50S ribosomal protein L7Ae"/>
    <property type="match status" value="1"/>
</dbReference>
<dbReference type="Gene3D" id="3.30.1330.30">
    <property type="match status" value="1"/>
</dbReference>
<dbReference type="HAMAP" id="MF_00326">
    <property type="entry name" value="Ribosomal_eL8"/>
    <property type="match status" value="1"/>
</dbReference>
<dbReference type="InterPro" id="IPR029064">
    <property type="entry name" value="Ribosomal_eL30-like_sf"/>
</dbReference>
<dbReference type="InterPro" id="IPR004038">
    <property type="entry name" value="Ribosomal_eL8/eL30/eS12/Gad45"/>
</dbReference>
<dbReference type="InterPro" id="IPR018492">
    <property type="entry name" value="Ribosomal_eL8/Nhp2"/>
</dbReference>
<dbReference type="InterPro" id="IPR022481">
    <property type="entry name" value="Ribosomal_eL8_arc"/>
</dbReference>
<dbReference type="NCBIfam" id="TIGR03677">
    <property type="entry name" value="eL8_ribo"/>
    <property type="match status" value="1"/>
</dbReference>
<dbReference type="Pfam" id="PF01248">
    <property type="entry name" value="Ribosomal_L7Ae"/>
    <property type="match status" value="1"/>
</dbReference>
<dbReference type="PRINTS" id="PR00881">
    <property type="entry name" value="L7ARS6FAMILY"/>
</dbReference>
<dbReference type="PRINTS" id="PR00884">
    <property type="entry name" value="RIBOSOMALHS6"/>
</dbReference>
<dbReference type="SUPFAM" id="SSF55315">
    <property type="entry name" value="L30e-like"/>
    <property type="match status" value="1"/>
</dbReference>
<evidence type="ECO:0000255" key="1">
    <source>
        <dbReference type="HAMAP-Rule" id="MF_00326"/>
    </source>
</evidence>
<evidence type="ECO:0000305" key="2"/>
<sequence>MPVYVEFDVPADLADDALEALEVARDTGTVKKGTNETTKAIERGTAELVLVAEDVSPEEIVMHLPELADEKGITLAFVETQDEIGQAAGLEVGSAAAAIIDAGEADSDVDDITAKIEELR</sequence>
<gene>
    <name evidence="1" type="primary">rpl7ae</name>
    <name type="ordered locus">HQ_2885A</name>
</gene>
<organism>
    <name type="scientific">Haloquadratum walsbyi (strain DSM 16790 / HBSQ001)</name>
    <dbReference type="NCBI Taxonomy" id="362976"/>
    <lineage>
        <taxon>Archaea</taxon>
        <taxon>Methanobacteriati</taxon>
        <taxon>Methanobacteriota</taxon>
        <taxon>Stenosarchaea group</taxon>
        <taxon>Halobacteria</taxon>
        <taxon>Halobacteriales</taxon>
        <taxon>Haloferacaceae</taxon>
        <taxon>Haloquadratum</taxon>
    </lineage>
</organism>
<proteinExistence type="inferred from homology"/>
<keyword id="KW-0963">Cytoplasm</keyword>
<keyword id="KW-1185">Reference proteome</keyword>
<keyword id="KW-0687">Ribonucleoprotein</keyword>
<keyword id="KW-0689">Ribosomal protein</keyword>
<keyword id="KW-0694">RNA-binding</keyword>
<keyword id="KW-0699">rRNA-binding</keyword>
<keyword id="KW-0819">tRNA processing</keyword>